<accession>B1HS82</accession>
<gene>
    <name evidence="1" type="primary">rsmA</name>
    <name evidence="1" type="synonym">ksgA</name>
    <name type="ordered locus">Bsph_0062</name>
</gene>
<sequence>MHKDIATPIRTQEILKKYGFSFKKSLGQNFLIDPNILRNIVSHAKLTENSGAIEVGPGIGALTEHLARSAKKVVSFEIDQRLLPVLEDTLSPYNNVSIVHSDILKADVAKVIAEEMPGIEDIMVVANLPYYVTTPILMKLLNDRLPIRGFVVMMQKEVADRITAKPGTKEYGSLSIAIQYYVKADIAMTVPKTVFMPQPNVDSAVIRLIKHDEPPVKVINEDFLFVVTRASFVQRRKTIYNNLQAGLPNGKTQKDFILEALAAANIEPTRRGETLTIQEFGKLADALYPVFAK</sequence>
<proteinExistence type="inferred from homology"/>
<protein>
    <recommendedName>
        <fullName evidence="1">Ribosomal RNA small subunit methyltransferase A</fullName>
        <ecNumber evidence="1">2.1.1.182</ecNumber>
    </recommendedName>
    <alternativeName>
        <fullName evidence="1">16S rRNA (adenine(1518)-N(6)/adenine(1519)-N(6))-dimethyltransferase</fullName>
    </alternativeName>
    <alternativeName>
        <fullName evidence="1">16S rRNA dimethyladenosine transferase</fullName>
    </alternativeName>
    <alternativeName>
        <fullName evidence="1">16S rRNA dimethylase</fullName>
    </alternativeName>
    <alternativeName>
        <fullName evidence="1">S-adenosylmethionine-6-N', N'-adenosyl(rRNA) dimethyltransferase</fullName>
    </alternativeName>
</protein>
<evidence type="ECO:0000255" key="1">
    <source>
        <dbReference type="HAMAP-Rule" id="MF_00607"/>
    </source>
</evidence>
<reference key="1">
    <citation type="journal article" date="2008" name="J. Bacteriol.">
        <title>Complete genome sequence of the mosquitocidal bacterium Bacillus sphaericus C3-41 and comparison with those of closely related Bacillus species.</title>
        <authorList>
            <person name="Hu X."/>
            <person name="Fan W."/>
            <person name="Han B."/>
            <person name="Liu H."/>
            <person name="Zheng D."/>
            <person name="Li Q."/>
            <person name="Dong W."/>
            <person name="Yan J."/>
            <person name="Gao M."/>
            <person name="Berry C."/>
            <person name="Yuan Z."/>
        </authorList>
    </citation>
    <scope>NUCLEOTIDE SEQUENCE [LARGE SCALE GENOMIC DNA]</scope>
    <source>
        <strain>C3-41</strain>
    </source>
</reference>
<feature type="chain" id="PRO_1000130290" description="Ribosomal RNA small subunit methyltransferase A">
    <location>
        <begin position="1"/>
        <end position="293"/>
    </location>
</feature>
<feature type="binding site" evidence="1">
    <location>
        <position position="29"/>
    </location>
    <ligand>
        <name>S-adenosyl-L-methionine</name>
        <dbReference type="ChEBI" id="CHEBI:59789"/>
    </ligand>
</feature>
<feature type="binding site" evidence="1">
    <location>
        <position position="31"/>
    </location>
    <ligand>
        <name>S-adenosyl-L-methionine</name>
        <dbReference type="ChEBI" id="CHEBI:59789"/>
    </ligand>
</feature>
<feature type="binding site" evidence="1">
    <location>
        <position position="56"/>
    </location>
    <ligand>
        <name>S-adenosyl-L-methionine</name>
        <dbReference type="ChEBI" id="CHEBI:59789"/>
    </ligand>
</feature>
<feature type="binding site" evidence="1">
    <location>
        <position position="77"/>
    </location>
    <ligand>
        <name>S-adenosyl-L-methionine</name>
        <dbReference type="ChEBI" id="CHEBI:59789"/>
    </ligand>
</feature>
<feature type="binding site" evidence="1">
    <location>
        <position position="102"/>
    </location>
    <ligand>
        <name>S-adenosyl-L-methionine</name>
        <dbReference type="ChEBI" id="CHEBI:59789"/>
    </ligand>
</feature>
<feature type="binding site" evidence="1">
    <location>
        <position position="127"/>
    </location>
    <ligand>
        <name>S-adenosyl-L-methionine</name>
        <dbReference type="ChEBI" id="CHEBI:59789"/>
    </ligand>
</feature>
<keyword id="KW-0963">Cytoplasm</keyword>
<keyword id="KW-0489">Methyltransferase</keyword>
<keyword id="KW-0694">RNA-binding</keyword>
<keyword id="KW-0698">rRNA processing</keyword>
<keyword id="KW-0949">S-adenosyl-L-methionine</keyword>
<keyword id="KW-0808">Transferase</keyword>
<organism>
    <name type="scientific">Lysinibacillus sphaericus (strain C3-41)</name>
    <dbReference type="NCBI Taxonomy" id="444177"/>
    <lineage>
        <taxon>Bacteria</taxon>
        <taxon>Bacillati</taxon>
        <taxon>Bacillota</taxon>
        <taxon>Bacilli</taxon>
        <taxon>Bacillales</taxon>
        <taxon>Bacillaceae</taxon>
        <taxon>Lysinibacillus</taxon>
    </lineage>
</organism>
<dbReference type="EC" id="2.1.1.182" evidence="1"/>
<dbReference type="EMBL" id="CP000817">
    <property type="protein sequence ID" value="ACA37700.1"/>
    <property type="molecule type" value="Genomic_DNA"/>
</dbReference>
<dbReference type="RefSeq" id="WP_012291874.1">
    <property type="nucleotide sequence ID" value="NC_010382.1"/>
</dbReference>
<dbReference type="SMR" id="B1HS82"/>
<dbReference type="EnsemblBacteria" id="ACA37700">
    <property type="protein sequence ID" value="ACA37700"/>
    <property type="gene ID" value="Bsph_0062"/>
</dbReference>
<dbReference type="KEGG" id="lsp:Bsph_0062"/>
<dbReference type="HOGENOM" id="CLU_041220_0_0_9"/>
<dbReference type="Proteomes" id="UP000002164">
    <property type="component" value="Chromosome"/>
</dbReference>
<dbReference type="GO" id="GO:0005829">
    <property type="term" value="C:cytosol"/>
    <property type="evidence" value="ECO:0007669"/>
    <property type="project" value="TreeGrafter"/>
</dbReference>
<dbReference type="GO" id="GO:0052908">
    <property type="term" value="F:16S rRNA (adenine(1518)-N(6)/adenine(1519)-N(6))-dimethyltransferase activity"/>
    <property type="evidence" value="ECO:0007669"/>
    <property type="project" value="UniProtKB-EC"/>
</dbReference>
<dbReference type="GO" id="GO:0003723">
    <property type="term" value="F:RNA binding"/>
    <property type="evidence" value="ECO:0007669"/>
    <property type="project" value="UniProtKB-KW"/>
</dbReference>
<dbReference type="CDD" id="cd02440">
    <property type="entry name" value="AdoMet_MTases"/>
    <property type="match status" value="1"/>
</dbReference>
<dbReference type="FunFam" id="3.40.50.150:FF:000023">
    <property type="entry name" value="Ribosomal RNA small subunit methyltransferase A"/>
    <property type="match status" value="1"/>
</dbReference>
<dbReference type="Gene3D" id="1.10.8.100">
    <property type="entry name" value="Ribosomal RNA adenine dimethylase-like, domain 2"/>
    <property type="match status" value="1"/>
</dbReference>
<dbReference type="Gene3D" id="3.40.50.150">
    <property type="entry name" value="Vaccinia Virus protein VP39"/>
    <property type="match status" value="1"/>
</dbReference>
<dbReference type="HAMAP" id="MF_00607">
    <property type="entry name" value="16SrRNA_methyltr_A"/>
    <property type="match status" value="1"/>
</dbReference>
<dbReference type="InterPro" id="IPR001737">
    <property type="entry name" value="KsgA/Erm"/>
</dbReference>
<dbReference type="InterPro" id="IPR023165">
    <property type="entry name" value="rRNA_Ade_diMease-like_C"/>
</dbReference>
<dbReference type="InterPro" id="IPR020596">
    <property type="entry name" value="rRNA_Ade_Mease_Trfase_CS"/>
</dbReference>
<dbReference type="InterPro" id="IPR020598">
    <property type="entry name" value="rRNA_Ade_methylase_Trfase_N"/>
</dbReference>
<dbReference type="InterPro" id="IPR011530">
    <property type="entry name" value="rRNA_adenine_dimethylase"/>
</dbReference>
<dbReference type="InterPro" id="IPR029063">
    <property type="entry name" value="SAM-dependent_MTases_sf"/>
</dbReference>
<dbReference type="NCBIfam" id="TIGR00755">
    <property type="entry name" value="ksgA"/>
    <property type="match status" value="1"/>
</dbReference>
<dbReference type="PANTHER" id="PTHR11727">
    <property type="entry name" value="DIMETHYLADENOSINE TRANSFERASE"/>
    <property type="match status" value="1"/>
</dbReference>
<dbReference type="PANTHER" id="PTHR11727:SF7">
    <property type="entry name" value="DIMETHYLADENOSINE TRANSFERASE-RELATED"/>
    <property type="match status" value="1"/>
</dbReference>
<dbReference type="Pfam" id="PF00398">
    <property type="entry name" value="RrnaAD"/>
    <property type="match status" value="1"/>
</dbReference>
<dbReference type="SMART" id="SM00650">
    <property type="entry name" value="rADc"/>
    <property type="match status" value="1"/>
</dbReference>
<dbReference type="SUPFAM" id="SSF53335">
    <property type="entry name" value="S-adenosyl-L-methionine-dependent methyltransferases"/>
    <property type="match status" value="1"/>
</dbReference>
<dbReference type="PROSITE" id="PS01131">
    <property type="entry name" value="RRNA_A_DIMETH"/>
    <property type="match status" value="1"/>
</dbReference>
<dbReference type="PROSITE" id="PS51689">
    <property type="entry name" value="SAM_RNA_A_N6_MT"/>
    <property type="match status" value="1"/>
</dbReference>
<comment type="function">
    <text evidence="1">Specifically dimethylates two adjacent adenosines (A1518 and A1519) in the loop of a conserved hairpin near the 3'-end of 16S rRNA in the 30S particle. May play a critical role in biogenesis of 30S subunits.</text>
</comment>
<comment type="catalytic activity">
    <reaction evidence="1">
        <text>adenosine(1518)/adenosine(1519) in 16S rRNA + 4 S-adenosyl-L-methionine = N(6)-dimethyladenosine(1518)/N(6)-dimethyladenosine(1519) in 16S rRNA + 4 S-adenosyl-L-homocysteine + 4 H(+)</text>
        <dbReference type="Rhea" id="RHEA:19609"/>
        <dbReference type="Rhea" id="RHEA-COMP:10232"/>
        <dbReference type="Rhea" id="RHEA-COMP:10233"/>
        <dbReference type="ChEBI" id="CHEBI:15378"/>
        <dbReference type="ChEBI" id="CHEBI:57856"/>
        <dbReference type="ChEBI" id="CHEBI:59789"/>
        <dbReference type="ChEBI" id="CHEBI:74411"/>
        <dbReference type="ChEBI" id="CHEBI:74493"/>
        <dbReference type="EC" id="2.1.1.182"/>
    </reaction>
</comment>
<comment type="subcellular location">
    <subcellularLocation>
        <location evidence="1">Cytoplasm</location>
    </subcellularLocation>
</comment>
<comment type="similarity">
    <text evidence="1">Belongs to the class I-like SAM-binding methyltransferase superfamily. rRNA adenine N(6)-methyltransferase family. RsmA subfamily.</text>
</comment>
<name>RSMA_LYSSC</name>